<name>TRUB_MARMS</name>
<keyword id="KW-0413">Isomerase</keyword>
<keyword id="KW-0819">tRNA processing</keyword>
<evidence type="ECO:0000255" key="1">
    <source>
        <dbReference type="HAMAP-Rule" id="MF_01080"/>
    </source>
</evidence>
<proteinExistence type="inferred from homology"/>
<protein>
    <recommendedName>
        <fullName evidence="1">tRNA pseudouridine synthase B</fullName>
        <ecNumber evidence="1">5.4.99.25</ecNumber>
    </recommendedName>
    <alternativeName>
        <fullName evidence="1">tRNA pseudouridine(55) synthase</fullName>
        <shortName evidence="1">Psi55 synthase</shortName>
    </alternativeName>
    <alternativeName>
        <fullName evidence="1">tRNA pseudouridylate synthase</fullName>
    </alternativeName>
    <alternativeName>
        <fullName evidence="1">tRNA-uridine isomerase</fullName>
    </alternativeName>
</protein>
<comment type="function">
    <text evidence="1">Responsible for synthesis of pseudouridine from uracil-55 in the psi GC loop of transfer RNAs.</text>
</comment>
<comment type="catalytic activity">
    <reaction evidence="1">
        <text>uridine(55) in tRNA = pseudouridine(55) in tRNA</text>
        <dbReference type="Rhea" id="RHEA:42532"/>
        <dbReference type="Rhea" id="RHEA-COMP:10101"/>
        <dbReference type="Rhea" id="RHEA-COMP:10102"/>
        <dbReference type="ChEBI" id="CHEBI:65314"/>
        <dbReference type="ChEBI" id="CHEBI:65315"/>
        <dbReference type="EC" id="5.4.99.25"/>
    </reaction>
</comment>
<comment type="similarity">
    <text evidence="1">Belongs to the pseudouridine synthase TruB family. Type 1 subfamily.</text>
</comment>
<dbReference type="EC" id="5.4.99.25" evidence="1"/>
<dbReference type="EMBL" id="CP000749">
    <property type="protein sequence ID" value="ABR69960.1"/>
    <property type="molecule type" value="Genomic_DNA"/>
</dbReference>
<dbReference type="SMR" id="A6VU31"/>
<dbReference type="STRING" id="400668.Mmwyl1_1029"/>
<dbReference type="KEGG" id="mmw:Mmwyl1_1029"/>
<dbReference type="eggNOG" id="COG0130">
    <property type="taxonomic scope" value="Bacteria"/>
</dbReference>
<dbReference type="HOGENOM" id="CLU_032087_0_3_6"/>
<dbReference type="OrthoDB" id="9802309at2"/>
<dbReference type="GO" id="GO:0003723">
    <property type="term" value="F:RNA binding"/>
    <property type="evidence" value="ECO:0007669"/>
    <property type="project" value="InterPro"/>
</dbReference>
<dbReference type="GO" id="GO:0160148">
    <property type="term" value="F:tRNA pseudouridine(55) synthase activity"/>
    <property type="evidence" value="ECO:0007669"/>
    <property type="project" value="UniProtKB-EC"/>
</dbReference>
<dbReference type="GO" id="GO:1990481">
    <property type="term" value="P:mRNA pseudouridine synthesis"/>
    <property type="evidence" value="ECO:0007669"/>
    <property type="project" value="TreeGrafter"/>
</dbReference>
<dbReference type="GO" id="GO:0031119">
    <property type="term" value="P:tRNA pseudouridine synthesis"/>
    <property type="evidence" value="ECO:0007669"/>
    <property type="project" value="UniProtKB-UniRule"/>
</dbReference>
<dbReference type="CDD" id="cd02573">
    <property type="entry name" value="PseudoU_synth_EcTruB"/>
    <property type="match status" value="1"/>
</dbReference>
<dbReference type="CDD" id="cd21152">
    <property type="entry name" value="PUA_TruB_bacterial"/>
    <property type="match status" value="1"/>
</dbReference>
<dbReference type="FunFam" id="3.30.2350.10:FF:000011">
    <property type="entry name" value="tRNA pseudouridine synthase B"/>
    <property type="match status" value="1"/>
</dbReference>
<dbReference type="Gene3D" id="3.30.2350.10">
    <property type="entry name" value="Pseudouridine synthase"/>
    <property type="match status" value="1"/>
</dbReference>
<dbReference type="Gene3D" id="2.30.130.10">
    <property type="entry name" value="PUA domain"/>
    <property type="match status" value="1"/>
</dbReference>
<dbReference type="HAMAP" id="MF_01080">
    <property type="entry name" value="TruB_bact"/>
    <property type="match status" value="1"/>
</dbReference>
<dbReference type="InterPro" id="IPR020103">
    <property type="entry name" value="PsdUridine_synth_cat_dom_sf"/>
</dbReference>
<dbReference type="InterPro" id="IPR002501">
    <property type="entry name" value="PsdUridine_synth_N"/>
</dbReference>
<dbReference type="InterPro" id="IPR015947">
    <property type="entry name" value="PUA-like_sf"/>
</dbReference>
<dbReference type="InterPro" id="IPR036974">
    <property type="entry name" value="PUA_sf"/>
</dbReference>
<dbReference type="InterPro" id="IPR014780">
    <property type="entry name" value="tRNA_psdUridine_synth_TruB"/>
</dbReference>
<dbReference type="InterPro" id="IPR015240">
    <property type="entry name" value="tRNA_sdUridine_synth_fam1_C"/>
</dbReference>
<dbReference type="InterPro" id="IPR032819">
    <property type="entry name" value="TruB_C"/>
</dbReference>
<dbReference type="NCBIfam" id="TIGR00431">
    <property type="entry name" value="TruB"/>
    <property type="match status" value="1"/>
</dbReference>
<dbReference type="PANTHER" id="PTHR13767:SF2">
    <property type="entry name" value="PSEUDOURIDYLATE SYNTHASE TRUB1"/>
    <property type="match status" value="1"/>
</dbReference>
<dbReference type="PANTHER" id="PTHR13767">
    <property type="entry name" value="TRNA-PSEUDOURIDINE SYNTHASE"/>
    <property type="match status" value="1"/>
</dbReference>
<dbReference type="Pfam" id="PF09157">
    <property type="entry name" value="TruB-C_2"/>
    <property type="match status" value="1"/>
</dbReference>
<dbReference type="Pfam" id="PF16198">
    <property type="entry name" value="TruB_C_2"/>
    <property type="match status" value="1"/>
</dbReference>
<dbReference type="Pfam" id="PF01509">
    <property type="entry name" value="TruB_N"/>
    <property type="match status" value="1"/>
</dbReference>
<dbReference type="SUPFAM" id="SSF55120">
    <property type="entry name" value="Pseudouridine synthase"/>
    <property type="match status" value="1"/>
</dbReference>
<dbReference type="SUPFAM" id="SSF88697">
    <property type="entry name" value="PUA domain-like"/>
    <property type="match status" value="1"/>
</dbReference>
<accession>A6VU31</accession>
<sequence>MVKAKWRSVDGIVLLNKPIGLSSNQALQRVRRLYQAAKAGHTGALDPLATGMLPLCLGEATKFSQYLLDADKRYLTCIQLGKRTTTGDREGEVLTEDSVPTLTDESLEEILNGFRGEIEQIPPMYSALKHEGKPLYEYARQGIVIERKRRRVTISNLTLVSRTEDTLTLDIQCSKGTYIRTIGEDIGEALGCGAHLHSLHRISTAGYLPENMMTLEEFEAIAEQGYDALDAHLITMDTAVEHFAKVELPESDTVNMMFGRTVPSPVSLEHEAVVRMYDQGTQRFLGLGQIKGAFIRPYRLVNTSEFSL</sequence>
<feature type="chain" id="PRO_1000084622" description="tRNA pseudouridine synthase B">
    <location>
        <begin position="1"/>
        <end position="308"/>
    </location>
</feature>
<feature type="active site" description="Nucleophile" evidence="1">
    <location>
        <position position="46"/>
    </location>
</feature>
<gene>
    <name evidence="1" type="primary">truB</name>
    <name type="ordered locus">Mmwyl1_1029</name>
</gene>
<reference key="1">
    <citation type="submission" date="2007-06" db="EMBL/GenBank/DDBJ databases">
        <title>Complete sequence of Marinomonas sp. MWYL1.</title>
        <authorList>
            <consortium name="US DOE Joint Genome Institute"/>
            <person name="Copeland A."/>
            <person name="Lucas S."/>
            <person name="Lapidus A."/>
            <person name="Barry K."/>
            <person name="Glavina del Rio T."/>
            <person name="Dalin E."/>
            <person name="Tice H."/>
            <person name="Pitluck S."/>
            <person name="Kiss H."/>
            <person name="Brettin T."/>
            <person name="Bruce D."/>
            <person name="Detter J.C."/>
            <person name="Han C."/>
            <person name="Schmutz J."/>
            <person name="Larimer F."/>
            <person name="Land M."/>
            <person name="Hauser L."/>
            <person name="Kyrpides N."/>
            <person name="Kim E."/>
            <person name="Johnston A.W.B."/>
            <person name="Todd J.D."/>
            <person name="Rogers R."/>
            <person name="Wexler M."/>
            <person name="Bond P.L."/>
            <person name="Li Y."/>
            <person name="Richardson P."/>
        </authorList>
    </citation>
    <scope>NUCLEOTIDE SEQUENCE [LARGE SCALE GENOMIC DNA]</scope>
    <source>
        <strain>MWYL1</strain>
    </source>
</reference>
<organism>
    <name type="scientific">Marinomonas sp. (strain MWYL1)</name>
    <dbReference type="NCBI Taxonomy" id="400668"/>
    <lineage>
        <taxon>Bacteria</taxon>
        <taxon>Pseudomonadati</taxon>
        <taxon>Pseudomonadota</taxon>
        <taxon>Gammaproteobacteria</taxon>
        <taxon>Oceanospirillales</taxon>
        <taxon>Oceanospirillaceae</taxon>
        <taxon>Marinomonas</taxon>
    </lineage>
</organism>